<dbReference type="EC" id="3.4.21.-"/>
<dbReference type="EMBL" id="BX571857">
    <property type="protein sequence ID" value="CAG43538.1"/>
    <property type="molecule type" value="Genomic_DNA"/>
</dbReference>
<dbReference type="RefSeq" id="WP_001038859.1">
    <property type="nucleotide sequence ID" value="NC_002953.3"/>
</dbReference>
<dbReference type="SMR" id="Q6G8C3"/>
<dbReference type="MEROPS" id="S01.283"/>
<dbReference type="KEGG" id="sas:SAS1734"/>
<dbReference type="HOGENOM" id="CLU_073589_2_0_9"/>
<dbReference type="GO" id="GO:0005576">
    <property type="term" value="C:extracellular region"/>
    <property type="evidence" value="ECO:0007669"/>
    <property type="project" value="UniProtKB-SubCell"/>
</dbReference>
<dbReference type="GO" id="GO:0004252">
    <property type="term" value="F:serine-type endopeptidase activity"/>
    <property type="evidence" value="ECO:0007669"/>
    <property type="project" value="InterPro"/>
</dbReference>
<dbReference type="GO" id="GO:0006508">
    <property type="term" value="P:proteolysis"/>
    <property type="evidence" value="ECO:0007669"/>
    <property type="project" value="UniProtKB-KW"/>
</dbReference>
<dbReference type="Gene3D" id="2.40.10.10">
    <property type="entry name" value="Trypsin-like serine proteases"/>
    <property type="match status" value="2"/>
</dbReference>
<dbReference type="InterPro" id="IPR009003">
    <property type="entry name" value="Peptidase_S1_PA"/>
</dbReference>
<dbReference type="InterPro" id="IPR043504">
    <property type="entry name" value="Peptidase_S1_PA_chymotrypsin"/>
</dbReference>
<dbReference type="InterPro" id="IPR008256">
    <property type="entry name" value="Peptidase_S1B"/>
</dbReference>
<dbReference type="InterPro" id="IPR008353">
    <property type="entry name" value="Peptidase_S1B_tx"/>
</dbReference>
<dbReference type="InterPro" id="IPR001254">
    <property type="entry name" value="Trypsin_dom"/>
</dbReference>
<dbReference type="InterPro" id="IPR028301">
    <property type="entry name" value="V8_his_AS"/>
</dbReference>
<dbReference type="PANTHER" id="PTHR43019:SF23">
    <property type="entry name" value="PROTEASE DO-LIKE 5, CHLOROPLASTIC"/>
    <property type="match status" value="1"/>
</dbReference>
<dbReference type="PANTHER" id="PTHR43019">
    <property type="entry name" value="SERINE ENDOPROTEASE DEGS"/>
    <property type="match status" value="1"/>
</dbReference>
<dbReference type="Pfam" id="PF00089">
    <property type="entry name" value="Trypsin"/>
    <property type="match status" value="1"/>
</dbReference>
<dbReference type="PRINTS" id="PR01774">
    <property type="entry name" value="EXFOLTOXIN"/>
</dbReference>
<dbReference type="PRINTS" id="PR00839">
    <property type="entry name" value="V8PROTEASE"/>
</dbReference>
<dbReference type="SUPFAM" id="SSF50494">
    <property type="entry name" value="Trypsin-like serine proteases"/>
    <property type="match status" value="1"/>
</dbReference>
<dbReference type="PROSITE" id="PS00672">
    <property type="entry name" value="V8_HIS"/>
    <property type="match status" value="1"/>
</dbReference>
<protein>
    <recommendedName>
        <fullName>Serine protease SplC</fullName>
        <ecNumber>3.4.21.-</ecNumber>
    </recommendedName>
</protein>
<sequence length="239" mass="26037">MNKNIVIKSMAALAILTSATGINAAVVEETQQIANAEKNVTQVKDTNIFPYNGVVSFKDATGFVIGKNTIITNKHVSKDYKVGDRITAHPDGDKGNGGIYKIKSISDYPGDEDISVMNIEEQAVERGPKGFNFNENVQALNFAKDAKVDDKIKVIGYPLPAQNSFKQFESTGTIKRIKDNILNFDAYIEPGNSGSPVLNSNNEVIGVVYGGIGKIGSEYNGAVYFTPQIKDFIQKHIEQ</sequence>
<reference key="1">
    <citation type="journal article" date="2004" name="Proc. Natl. Acad. Sci. U.S.A.">
        <title>Complete genomes of two clinical Staphylococcus aureus strains: evidence for the rapid evolution of virulence and drug resistance.</title>
        <authorList>
            <person name="Holden M.T.G."/>
            <person name="Feil E.J."/>
            <person name="Lindsay J.A."/>
            <person name="Peacock S.J."/>
            <person name="Day N.P.J."/>
            <person name="Enright M.C."/>
            <person name="Foster T.J."/>
            <person name="Moore C.E."/>
            <person name="Hurst L."/>
            <person name="Atkin R."/>
            <person name="Barron A."/>
            <person name="Bason N."/>
            <person name="Bentley S.D."/>
            <person name="Chillingworth C."/>
            <person name="Chillingworth T."/>
            <person name="Churcher C."/>
            <person name="Clark L."/>
            <person name="Corton C."/>
            <person name="Cronin A."/>
            <person name="Doggett J."/>
            <person name="Dowd L."/>
            <person name="Feltwell T."/>
            <person name="Hance Z."/>
            <person name="Harris B."/>
            <person name="Hauser H."/>
            <person name="Holroyd S."/>
            <person name="Jagels K."/>
            <person name="James K.D."/>
            <person name="Lennard N."/>
            <person name="Line A."/>
            <person name="Mayes R."/>
            <person name="Moule S."/>
            <person name="Mungall K."/>
            <person name="Ormond D."/>
            <person name="Quail M.A."/>
            <person name="Rabbinowitsch E."/>
            <person name="Rutherford K.M."/>
            <person name="Sanders M."/>
            <person name="Sharp S."/>
            <person name="Simmonds M."/>
            <person name="Stevens K."/>
            <person name="Whitehead S."/>
            <person name="Barrell B.G."/>
            <person name="Spratt B.G."/>
            <person name="Parkhill J."/>
        </authorList>
    </citation>
    <scope>NUCLEOTIDE SEQUENCE [LARGE SCALE GENOMIC DNA]</scope>
    <source>
        <strain>MSSA476</strain>
    </source>
</reference>
<proteinExistence type="inferred from homology"/>
<organism>
    <name type="scientific">Staphylococcus aureus (strain MSSA476)</name>
    <dbReference type="NCBI Taxonomy" id="282459"/>
    <lineage>
        <taxon>Bacteria</taxon>
        <taxon>Bacillati</taxon>
        <taxon>Bacillota</taxon>
        <taxon>Bacilli</taxon>
        <taxon>Bacillales</taxon>
        <taxon>Staphylococcaceae</taxon>
        <taxon>Staphylococcus</taxon>
    </lineage>
</organism>
<feature type="signal peptide" evidence="1">
    <location>
        <begin position="1"/>
        <end position="36"/>
    </location>
</feature>
<feature type="chain" id="PRO_0000359555" description="Serine protease SplC">
    <location>
        <begin position="37"/>
        <end position="239"/>
    </location>
</feature>
<feature type="active site" description="Charge relay system" evidence="1">
    <location>
        <position position="75"/>
    </location>
</feature>
<feature type="active site" description="Charge relay system" evidence="1">
    <location>
        <position position="113"/>
    </location>
</feature>
<feature type="active site" description="Charge relay system" evidence="1">
    <location>
        <position position="193"/>
    </location>
</feature>
<gene>
    <name type="primary">splC</name>
    <name type="ordered locus">SAS1734</name>
</gene>
<evidence type="ECO:0000250" key="1"/>
<evidence type="ECO:0000305" key="2"/>
<accession>Q6G8C3</accession>
<name>SPLC_STAAS</name>
<comment type="subcellular location">
    <subcellularLocation>
        <location evidence="1">Secreted</location>
    </subcellularLocation>
</comment>
<comment type="similarity">
    <text evidence="2">Belongs to the peptidase S1B family.</text>
</comment>
<keyword id="KW-0378">Hydrolase</keyword>
<keyword id="KW-0645">Protease</keyword>
<keyword id="KW-0964">Secreted</keyword>
<keyword id="KW-0720">Serine protease</keyword>
<keyword id="KW-0732">Signal</keyword>